<feature type="chain" id="PRO_0000139252" description="Methionine--tRNA ligase">
    <location>
        <begin position="1"/>
        <end position="665"/>
    </location>
</feature>
<feature type="domain" description="tRNA-binding">
    <location>
        <begin position="562"/>
        <end position="665"/>
    </location>
</feature>
<feature type="short sequence motif" description="'HIGH' region">
    <location>
        <begin position="12"/>
        <end position="22"/>
    </location>
</feature>
<feature type="short sequence motif" description="'KMSKS' region">
    <location>
        <begin position="308"/>
        <end position="312"/>
    </location>
</feature>
<feature type="binding site" evidence="1">
    <location>
        <position position="311"/>
    </location>
    <ligand>
        <name>ATP</name>
        <dbReference type="ChEBI" id="CHEBI:30616"/>
    </ligand>
</feature>
<protein>
    <recommendedName>
        <fullName>Methionine--tRNA ligase</fullName>
        <ecNumber>6.1.1.10</ecNumber>
    </recommendedName>
    <alternativeName>
        <fullName>Methionyl-tRNA synthetase</fullName>
        <shortName>MetRS</shortName>
    </alternativeName>
</protein>
<comment type="function">
    <text evidence="1">Is required not only for elongation of protein synthesis but also for the initiation of all mRNA translation through initiator tRNA(fMet) aminoacylation.</text>
</comment>
<comment type="catalytic activity">
    <reaction>
        <text>tRNA(Met) + L-methionine + ATP = L-methionyl-tRNA(Met) + AMP + diphosphate</text>
        <dbReference type="Rhea" id="RHEA:13481"/>
        <dbReference type="Rhea" id="RHEA-COMP:9667"/>
        <dbReference type="Rhea" id="RHEA-COMP:9698"/>
        <dbReference type="ChEBI" id="CHEBI:30616"/>
        <dbReference type="ChEBI" id="CHEBI:33019"/>
        <dbReference type="ChEBI" id="CHEBI:57844"/>
        <dbReference type="ChEBI" id="CHEBI:78442"/>
        <dbReference type="ChEBI" id="CHEBI:78530"/>
        <dbReference type="ChEBI" id="CHEBI:456215"/>
        <dbReference type="EC" id="6.1.1.10"/>
    </reaction>
</comment>
<comment type="subunit">
    <text evidence="1">Homodimer.</text>
</comment>
<comment type="subcellular location">
    <subcellularLocation>
        <location evidence="1">Cytoplasm</location>
    </subcellularLocation>
</comment>
<comment type="similarity">
    <text evidence="2">Belongs to the class-I aminoacyl-tRNA synthetase family. MetG type 2B subfamily.</text>
</comment>
<comment type="sequence caution" evidence="2">
    <conflict type="erroneous initiation">
        <sequence resource="EMBL-CDS" id="AAK33446"/>
    </conflict>
</comment>
<evidence type="ECO:0000250" key="1"/>
<evidence type="ECO:0000305" key="2"/>
<keyword id="KW-0030">Aminoacyl-tRNA synthetase</keyword>
<keyword id="KW-0067">ATP-binding</keyword>
<keyword id="KW-0963">Cytoplasm</keyword>
<keyword id="KW-0436">Ligase</keyword>
<keyword id="KW-0547">Nucleotide-binding</keyword>
<keyword id="KW-0648">Protein biosynthesis</keyword>
<keyword id="KW-1185">Reference proteome</keyword>
<keyword id="KW-0694">RNA-binding</keyword>
<keyword id="KW-0820">tRNA-binding</keyword>
<accession>Q9A178</accession>
<accession>Q490K5</accession>
<gene>
    <name type="primary">metG</name>
    <name type="synonym">metS</name>
    <name type="ordered locus">SPy_0422</name>
    <name type="ordered locus">M5005_Spy0345</name>
</gene>
<organism>
    <name type="scientific">Streptococcus pyogenes serotype M1</name>
    <dbReference type="NCBI Taxonomy" id="301447"/>
    <lineage>
        <taxon>Bacteria</taxon>
        <taxon>Bacillati</taxon>
        <taxon>Bacillota</taxon>
        <taxon>Bacilli</taxon>
        <taxon>Lactobacillales</taxon>
        <taxon>Streptococcaceae</taxon>
        <taxon>Streptococcus</taxon>
    </lineage>
</organism>
<dbReference type="EC" id="6.1.1.10"/>
<dbReference type="EMBL" id="AE004092">
    <property type="protein sequence ID" value="AAK33446.1"/>
    <property type="status" value="ALT_INIT"/>
    <property type="molecule type" value="Genomic_DNA"/>
</dbReference>
<dbReference type="EMBL" id="CP000017">
    <property type="protein sequence ID" value="AAZ50963.1"/>
    <property type="molecule type" value="Genomic_DNA"/>
</dbReference>
<dbReference type="RefSeq" id="NP_268725.1">
    <property type="nucleotide sequence ID" value="NC_002737.2"/>
</dbReference>
<dbReference type="SMR" id="Q9A178"/>
<dbReference type="PaxDb" id="1314-HKU360_00380"/>
<dbReference type="KEGG" id="spy:SPy_0422"/>
<dbReference type="KEGG" id="spz:M5005_Spy0345"/>
<dbReference type="PATRIC" id="fig|160490.10.peg.357"/>
<dbReference type="HOGENOM" id="CLU_009710_9_4_9"/>
<dbReference type="OMA" id="NMFLPDR"/>
<dbReference type="Proteomes" id="UP000000750">
    <property type="component" value="Chromosome"/>
</dbReference>
<dbReference type="GO" id="GO:0005737">
    <property type="term" value="C:cytoplasm"/>
    <property type="evidence" value="ECO:0007669"/>
    <property type="project" value="UniProtKB-SubCell"/>
</dbReference>
<dbReference type="GO" id="GO:0005524">
    <property type="term" value="F:ATP binding"/>
    <property type="evidence" value="ECO:0007669"/>
    <property type="project" value="UniProtKB-UniRule"/>
</dbReference>
<dbReference type="GO" id="GO:0004825">
    <property type="term" value="F:methionine-tRNA ligase activity"/>
    <property type="evidence" value="ECO:0007669"/>
    <property type="project" value="UniProtKB-UniRule"/>
</dbReference>
<dbReference type="GO" id="GO:0000049">
    <property type="term" value="F:tRNA binding"/>
    <property type="evidence" value="ECO:0007669"/>
    <property type="project" value="UniProtKB-KW"/>
</dbReference>
<dbReference type="GO" id="GO:0006431">
    <property type="term" value="P:methionyl-tRNA aminoacylation"/>
    <property type="evidence" value="ECO:0007669"/>
    <property type="project" value="UniProtKB-UniRule"/>
</dbReference>
<dbReference type="CDD" id="cd07957">
    <property type="entry name" value="Anticodon_Ia_Met"/>
    <property type="match status" value="1"/>
</dbReference>
<dbReference type="CDD" id="cd00814">
    <property type="entry name" value="MetRS_core"/>
    <property type="match status" value="1"/>
</dbReference>
<dbReference type="CDD" id="cd02800">
    <property type="entry name" value="tRNA_bind_EcMetRS_like"/>
    <property type="match status" value="1"/>
</dbReference>
<dbReference type="FunFam" id="1.10.730.10:FF:000026">
    <property type="entry name" value="Methionine--tRNA ligase"/>
    <property type="match status" value="1"/>
</dbReference>
<dbReference type="FunFam" id="2.170.220.10:FF:000002">
    <property type="entry name" value="Methionine--tRNA ligase"/>
    <property type="match status" value="1"/>
</dbReference>
<dbReference type="FunFam" id="2.40.50.140:FF:000042">
    <property type="entry name" value="Methionine--tRNA ligase"/>
    <property type="match status" value="1"/>
</dbReference>
<dbReference type="Gene3D" id="2.170.220.10">
    <property type="match status" value="1"/>
</dbReference>
<dbReference type="Gene3D" id="3.40.50.620">
    <property type="entry name" value="HUPs"/>
    <property type="match status" value="1"/>
</dbReference>
<dbReference type="Gene3D" id="1.10.730.10">
    <property type="entry name" value="Isoleucyl-tRNA Synthetase, Domain 1"/>
    <property type="match status" value="1"/>
</dbReference>
<dbReference type="Gene3D" id="2.40.50.140">
    <property type="entry name" value="Nucleic acid-binding proteins"/>
    <property type="match status" value="1"/>
</dbReference>
<dbReference type="HAMAP" id="MF_01228">
    <property type="entry name" value="Met_tRNA_synth_type2"/>
    <property type="match status" value="1"/>
</dbReference>
<dbReference type="InterPro" id="IPR041872">
    <property type="entry name" value="Anticodon_Met"/>
</dbReference>
<dbReference type="InterPro" id="IPR004495">
    <property type="entry name" value="Met-tRNA-synth_bsu_C"/>
</dbReference>
<dbReference type="InterPro" id="IPR014758">
    <property type="entry name" value="Met-tRNA_synth"/>
</dbReference>
<dbReference type="InterPro" id="IPR023457">
    <property type="entry name" value="Met-tRNA_synth_2"/>
</dbReference>
<dbReference type="InterPro" id="IPR015413">
    <property type="entry name" value="Methionyl/Leucyl_tRNA_Synth"/>
</dbReference>
<dbReference type="InterPro" id="IPR033911">
    <property type="entry name" value="MetRS_core"/>
</dbReference>
<dbReference type="InterPro" id="IPR012340">
    <property type="entry name" value="NA-bd_OB-fold"/>
</dbReference>
<dbReference type="InterPro" id="IPR014729">
    <property type="entry name" value="Rossmann-like_a/b/a_fold"/>
</dbReference>
<dbReference type="InterPro" id="IPR002547">
    <property type="entry name" value="tRNA-bd_dom"/>
</dbReference>
<dbReference type="InterPro" id="IPR009080">
    <property type="entry name" value="tRNAsynth_Ia_anticodon-bd"/>
</dbReference>
<dbReference type="NCBIfam" id="TIGR00398">
    <property type="entry name" value="metG"/>
    <property type="match status" value="1"/>
</dbReference>
<dbReference type="NCBIfam" id="TIGR00399">
    <property type="entry name" value="metG_C_term"/>
    <property type="match status" value="1"/>
</dbReference>
<dbReference type="NCBIfam" id="NF008900">
    <property type="entry name" value="PRK12267.1"/>
    <property type="match status" value="1"/>
</dbReference>
<dbReference type="PANTHER" id="PTHR43326:SF1">
    <property type="entry name" value="METHIONINE--TRNA LIGASE, MITOCHONDRIAL"/>
    <property type="match status" value="1"/>
</dbReference>
<dbReference type="PANTHER" id="PTHR43326">
    <property type="entry name" value="METHIONYL-TRNA SYNTHETASE"/>
    <property type="match status" value="1"/>
</dbReference>
<dbReference type="Pfam" id="PF19303">
    <property type="entry name" value="Anticodon_3"/>
    <property type="match status" value="1"/>
</dbReference>
<dbReference type="Pfam" id="PF09334">
    <property type="entry name" value="tRNA-synt_1g"/>
    <property type="match status" value="1"/>
</dbReference>
<dbReference type="Pfam" id="PF01588">
    <property type="entry name" value="tRNA_bind"/>
    <property type="match status" value="1"/>
</dbReference>
<dbReference type="PRINTS" id="PR01041">
    <property type="entry name" value="TRNASYNTHMET"/>
</dbReference>
<dbReference type="SUPFAM" id="SSF47323">
    <property type="entry name" value="Anticodon-binding domain of a subclass of class I aminoacyl-tRNA synthetases"/>
    <property type="match status" value="1"/>
</dbReference>
<dbReference type="SUPFAM" id="SSF50249">
    <property type="entry name" value="Nucleic acid-binding proteins"/>
    <property type="match status" value="1"/>
</dbReference>
<dbReference type="SUPFAM" id="SSF52374">
    <property type="entry name" value="Nucleotidylyl transferase"/>
    <property type="match status" value="1"/>
</dbReference>
<dbReference type="PROSITE" id="PS50886">
    <property type="entry name" value="TRBD"/>
    <property type="match status" value="1"/>
</dbReference>
<reference key="1">
    <citation type="journal article" date="2001" name="Proc. Natl. Acad. Sci. U.S.A.">
        <title>Complete genome sequence of an M1 strain of Streptococcus pyogenes.</title>
        <authorList>
            <person name="Ferretti J.J."/>
            <person name="McShan W.M."/>
            <person name="Ajdic D.J."/>
            <person name="Savic D.J."/>
            <person name="Savic G."/>
            <person name="Lyon K."/>
            <person name="Primeaux C."/>
            <person name="Sezate S."/>
            <person name="Suvorov A.N."/>
            <person name="Kenton S."/>
            <person name="Lai H.S."/>
            <person name="Lin S.P."/>
            <person name="Qian Y."/>
            <person name="Jia H.G."/>
            <person name="Najar F.Z."/>
            <person name="Ren Q."/>
            <person name="Zhu H."/>
            <person name="Song L."/>
            <person name="White J."/>
            <person name="Yuan X."/>
            <person name="Clifton S.W."/>
            <person name="Roe B.A."/>
            <person name="McLaughlin R.E."/>
        </authorList>
    </citation>
    <scope>NUCLEOTIDE SEQUENCE [LARGE SCALE GENOMIC DNA]</scope>
    <source>
        <strain>ATCC 700294 / SF370 / Serotype M1</strain>
    </source>
</reference>
<reference key="2">
    <citation type="journal article" date="2005" name="J. Infect. Dis.">
        <title>Evolutionary origin and emergence of a highly successful clone of serotype M1 group A Streptococcus involved multiple horizontal gene transfer events.</title>
        <authorList>
            <person name="Sumby P."/>
            <person name="Porcella S.F."/>
            <person name="Madrigal A.G."/>
            <person name="Barbian K.D."/>
            <person name="Virtaneva K."/>
            <person name="Ricklefs S.M."/>
            <person name="Sturdevant D.E."/>
            <person name="Graham M.R."/>
            <person name="Vuopio-Varkila J."/>
            <person name="Hoe N.P."/>
            <person name="Musser J.M."/>
        </authorList>
    </citation>
    <scope>NUCLEOTIDE SEQUENCE [LARGE SCALE GENOMIC DNA]</scope>
    <source>
        <strain>ATCC BAA-947 / MGAS5005 / Serotype M1</strain>
    </source>
</reference>
<name>SYM_STRP1</name>
<sequence>MKKPFYITTPIYYPSGKLHIGSAYTTIACDVLARYKRLMGHEVFYLTGLDEHGQKIQTKAKEAGITPQTYVDNMAKDVKALWQLLDISYDTFIRTTDDYHEEVVAAVFEKLLAQDDIYLGEYSGWYSVSDEEFFTESQLKEVFRDEDGQVIGGIAPSGHEVEWVSEESYFLRLSKYDDRLVAFFKERPDFIQPDGRMNEMVKNFIEPGLEDLAVSRTTFTWGVPVPSDPKHVVYVWIDALLNYATALGYRQANHANFDKFWNGTVFHMVGKDILRFHSIYWPILLMMLDLPMPDRLIAHGWFVMKDGKMSKSKGNVVYPEMLVERFGLDPLRYYLMRSLPVGSDGTFTPEDYVGRINYELANDLGNLLNRTVAMINKYFDGTVPAYVDNGTAFDADLSQLIDAQLADYHKHMEAVDYPRALEAVWTIIARTNKYIDETAPWVLAKEDGDKAQLASVMAHLAASLRLVAHVIQPFMMETSAAIMAQLGLEPVSDLSTLALADFPANTKVVAKGTPIFPRLDMEAEIDYIKAQMGDSSAISQEKEWVPEEVALKSEKDVITFETFDAVEIRVAEVKEVSKVEGSEKLLRFRVDAGDGQDRQILSGIAKFYPNEQELVGKKLQIVANLKPRKMMKKYISQGMILSAEHGDQLTVLTVDSSVPNGSIIG</sequence>
<proteinExistence type="inferred from homology"/>